<proteinExistence type="evidence at transcript level"/>
<accession>Q8AVX5</accession>
<sequence>MGCFFSKKAKRKRNSEEEQPQQDGEEPKQYSWDKREKVDPKDYMFTGLKDQTVGKLPDKVAGQQFVIQECENCNIYIFDHSATITIDDCTNCRIFLGPVKGSVFFRDCKDCKCVVACQQFRTRDCRRMDVFLCCSTQPIIESSTSMKFGCFQYYYPELALQFKEAGLSILNNTWSNIHDFTPVAGETNWSLLPPDAVIQDFIPLPDSDELKCVRVSADVHKSIIPVTWGQRLKKSDESCLVVFFAGDYTTANARKMIDEMVGKGLSLIQTKEVAMKIEDAKRVFQDNITDLICLLEKGPVVALEFNGEGAVDSCQTVINNTFSGTKVFVSESKESASRDVDNFYNFADMQMGM</sequence>
<dbReference type="EMBL" id="BC041222">
    <property type="protein sequence ID" value="AAH41222.1"/>
    <property type="molecule type" value="mRNA"/>
</dbReference>
<dbReference type="RefSeq" id="NP_001080087.1">
    <property type="nucleotide sequence ID" value="NM_001086618.1"/>
</dbReference>
<dbReference type="SMR" id="Q8AVX5"/>
<dbReference type="DNASU" id="379779"/>
<dbReference type="GeneID" id="379779"/>
<dbReference type="KEGG" id="xla:379779"/>
<dbReference type="AGR" id="Xenbase:XB-GENE-961413"/>
<dbReference type="CTD" id="379779"/>
<dbReference type="Xenbase" id="XB-GENE-961413">
    <property type="gene designation" value="rp2.S"/>
</dbReference>
<dbReference type="OMA" id="KDYMLTG"/>
<dbReference type="OrthoDB" id="194775at2759"/>
<dbReference type="Proteomes" id="UP000186698">
    <property type="component" value="Chromosome 2S"/>
</dbReference>
<dbReference type="Bgee" id="379779">
    <property type="expression patterns" value="Expressed in egg cell and 19 other cell types or tissues"/>
</dbReference>
<dbReference type="GO" id="GO:0005929">
    <property type="term" value="C:cilium"/>
    <property type="evidence" value="ECO:0000318"/>
    <property type="project" value="GO_Central"/>
</dbReference>
<dbReference type="GO" id="GO:0005737">
    <property type="term" value="C:cytoplasm"/>
    <property type="evidence" value="ECO:0000250"/>
    <property type="project" value="UniProtKB"/>
</dbReference>
<dbReference type="GO" id="GO:1990075">
    <property type="term" value="C:periciliary membrane compartment"/>
    <property type="evidence" value="ECO:0000318"/>
    <property type="project" value="GO_Central"/>
</dbReference>
<dbReference type="GO" id="GO:0005886">
    <property type="term" value="C:plasma membrane"/>
    <property type="evidence" value="ECO:0000250"/>
    <property type="project" value="UniProtKB"/>
</dbReference>
<dbReference type="GO" id="GO:0005525">
    <property type="term" value="F:GTP binding"/>
    <property type="evidence" value="ECO:0007669"/>
    <property type="project" value="UniProtKB-KW"/>
</dbReference>
<dbReference type="GO" id="GO:0005096">
    <property type="term" value="F:GTPase activator activity"/>
    <property type="evidence" value="ECO:0000250"/>
    <property type="project" value="UniProtKB"/>
</dbReference>
<dbReference type="GO" id="GO:0006892">
    <property type="term" value="P:post-Golgi vesicle-mediated transport"/>
    <property type="evidence" value="ECO:0000318"/>
    <property type="project" value="GO_Central"/>
</dbReference>
<dbReference type="FunFam" id="2.160.20.70:FF:000004">
    <property type="entry name" value="Protein XRP2"/>
    <property type="match status" value="1"/>
</dbReference>
<dbReference type="FunFam" id="3.30.70.141:FF:000007">
    <property type="entry name" value="Protein XRP2"/>
    <property type="match status" value="1"/>
</dbReference>
<dbReference type="Gene3D" id="2.160.20.70">
    <property type="match status" value="1"/>
</dbReference>
<dbReference type="Gene3D" id="3.30.70.141">
    <property type="entry name" value="Nucleoside diphosphate kinase-like domain"/>
    <property type="match status" value="1"/>
</dbReference>
<dbReference type="InterPro" id="IPR017901">
    <property type="entry name" value="C-CAP_CF_C-like"/>
</dbReference>
<dbReference type="InterPro" id="IPR016098">
    <property type="entry name" value="CAP/MinC_C"/>
</dbReference>
<dbReference type="InterPro" id="IPR036223">
    <property type="entry name" value="CAP_C_sf"/>
</dbReference>
<dbReference type="InterPro" id="IPR006599">
    <property type="entry name" value="CARP_motif"/>
</dbReference>
<dbReference type="InterPro" id="IPR036850">
    <property type="entry name" value="NDK-like_dom_sf"/>
</dbReference>
<dbReference type="InterPro" id="IPR012945">
    <property type="entry name" value="Tubulin-bd_cofactor_C_dom"/>
</dbReference>
<dbReference type="InterPro" id="IPR039093">
    <property type="entry name" value="XRP2"/>
</dbReference>
<dbReference type="PANTHER" id="PTHR15440:SF0">
    <property type="entry name" value="PROTEIN XRP2"/>
    <property type="match status" value="1"/>
</dbReference>
<dbReference type="PANTHER" id="PTHR15440">
    <property type="entry name" value="XRP2 PROTEIN"/>
    <property type="match status" value="1"/>
</dbReference>
<dbReference type="Pfam" id="PF07986">
    <property type="entry name" value="TBCC"/>
    <property type="match status" value="1"/>
</dbReference>
<dbReference type="PIRSF" id="PIRSF037947">
    <property type="entry name" value="Protein_XRP2"/>
    <property type="match status" value="1"/>
</dbReference>
<dbReference type="SMART" id="SM00673">
    <property type="entry name" value="CARP"/>
    <property type="match status" value="2"/>
</dbReference>
<dbReference type="SUPFAM" id="SSF69340">
    <property type="entry name" value="C-terminal domain of adenylylcyclase associated protein"/>
    <property type="match status" value="1"/>
</dbReference>
<dbReference type="SUPFAM" id="SSF54919">
    <property type="entry name" value="Nucleoside diphosphate kinase, NDK"/>
    <property type="match status" value="1"/>
</dbReference>
<dbReference type="PROSITE" id="PS51329">
    <property type="entry name" value="C_CAP_COFACTOR_C"/>
    <property type="match status" value="1"/>
</dbReference>
<dbReference type="PROSITE" id="PS51374">
    <property type="entry name" value="NDPK_LIKE"/>
    <property type="match status" value="1"/>
</dbReference>
<protein>
    <recommendedName>
        <fullName>Protein XRP2</fullName>
    </recommendedName>
</protein>
<keyword id="KW-1003">Cell membrane</keyword>
<keyword id="KW-0342">GTP-binding</keyword>
<keyword id="KW-0343">GTPase activation</keyword>
<keyword id="KW-0449">Lipoprotein</keyword>
<keyword id="KW-0472">Membrane</keyword>
<keyword id="KW-0519">Myristate</keyword>
<keyword id="KW-0547">Nucleotide-binding</keyword>
<keyword id="KW-0564">Palmitate</keyword>
<keyword id="KW-1185">Reference proteome</keyword>
<organism>
    <name type="scientific">Xenopus laevis</name>
    <name type="common">African clawed frog</name>
    <dbReference type="NCBI Taxonomy" id="8355"/>
    <lineage>
        <taxon>Eukaryota</taxon>
        <taxon>Metazoa</taxon>
        <taxon>Chordata</taxon>
        <taxon>Craniata</taxon>
        <taxon>Vertebrata</taxon>
        <taxon>Euteleostomi</taxon>
        <taxon>Amphibia</taxon>
        <taxon>Batrachia</taxon>
        <taxon>Anura</taxon>
        <taxon>Pipoidea</taxon>
        <taxon>Pipidae</taxon>
        <taxon>Xenopodinae</taxon>
        <taxon>Xenopus</taxon>
        <taxon>Xenopus</taxon>
    </lineage>
</organism>
<reference key="1">
    <citation type="submission" date="2002-12" db="EMBL/GenBank/DDBJ databases">
        <authorList>
            <consortium name="NIH - Xenopus Gene Collection (XGC) project"/>
        </authorList>
    </citation>
    <scope>NUCLEOTIDE SEQUENCE [LARGE SCALE MRNA]</scope>
    <source>
        <tissue>Embryo</tissue>
    </source>
</reference>
<comment type="function">
    <text evidence="1">Acts as a GTPase-activating protein (GAP) for tubulin in concert with tubulin-specific chaperone C, but does not enhance tubulin heterodimerization. Acts as a GTPase-activating protein. May act as guanine nucleotide dissociation inhibitor towards ADP-ribosylation factor-like proteins (By similarity).</text>
</comment>
<comment type="subcellular location">
    <subcellularLocation>
        <location evidence="2">Cell membrane</location>
        <topology evidence="2">Lipid-anchor</topology>
        <orientation evidence="2">Cytoplasmic side</orientation>
    </subcellularLocation>
    <text evidence="2">Detected predominantly at the plasma membrane of rod and cone photoreceptors. Not detected in the nucleus.</text>
</comment>
<comment type="PTM">
    <text evidence="6">Myristoylated on Gly-2; which may be required for membrane targeting.</text>
</comment>
<comment type="PTM">
    <text evidence="6">Palmitoylated on Cys-3; which may be required for plasma membrane targeting.</text>
</comment>
<comment type="similarity">
    <text evidence="6">Belongs to the TBCC family.</text>
</comment>
<evidence type="ECO:0000250" key="1"/>
<evidence type="ECO:0000250" key="2">
    <source>
        <dbReference type="UniProtKB" id="O75695"/>
    </source>
</evidence>
<evidence type="ECO:0000255" key="3"/>
<evidence type="ECO:0000255" key="4">
    <source>
        <dbReference type="PROSITE-ProRule" id="PRU00659"/>
    </source>
</evidence>
<evidence type="ECO:0000256" key="5">
    <source>
        <dbReference type="SAM" id="MobiDB-lite"/>
    </source>
</evidence>
<evidence type="ECO:0000305" key="6"/>
<gene>
    <name type="primary">rp2</name>
</gene>
<name>XRP2_XENLA</name>
<feature type="initiator methionine" description="Removed" evidence="3">
    <location>
        <position position="1"/>
    </location>
</feature>
<feature type="chain" id="PRO_0000235806" description="Protein XRP2">
    <location>
        <begin position="2"/>
        <end position="353"/>
    </location>
</feature>
<feature type="domain" description="C-CAP/cofactor C-like" evidence="4">
    <location>
        <begin position="27"/>
        <end position="182"/>
    </location>
</feature>
<feature type="region of interest" description="Disordered" evidence="5">
    <location>
        <begin position="1"/>
        <end position="37"/>
    </location>
</feature>
<feature type="compositionally biased region" description="Basic and acidic residues" evidence="5">
    <location>
        <begin position="25"/>
        <end position="37"/>
    </location>
</feature>
<feature type="binding site" evidence="1">
    <location>
        <begin position="101"/>
        <end position="102"/>
    </location>
    <ligand>
        <name>GTP</name>
        <dbReference type="ChEBI" id="CHEBI:37565"/>
    </ligand>
</feature>
<feature type="binding site" evidence="1">
    <location>
        <begin position="118"/>
        <end position="121"/>
    </location>
    <ligand>
        <name>GTP</name>
        <dbReference type="ChEBI" id="CHEBI:37565"/>
    </ligand>
</feature>
<feature type="lipid moiety-binding region" description="N-myristoyl glycine" evidence="3">
    <location>
        <position position="2"/>
    </location>
</feature>
<feature type="lipid moiety-binding region" description="S-palmitoyl cysteine" evidence="3">
    <location>
        <position position="3"/>
    </location>
</feature>